<comment type="function">
    <text evidence="1">Involved in ribosome biogenesis; more specifically in 18S rRNA pseudouridylation and in cleavage of pre-rRNA.</text>
</comment>
<comment type="similarity">
    <text evidence="2">Belongs to the NOP10 family.</text>
</comment>
<gene>
    <name type="primary">nop10</name>
    <name type="ordered locus">PAE3031</name>
</gene>
<organism>
    <name type="scientific">Pyrobaculum aerophilum (strain ATCC 51768 / DSM 7523 / JCM 9630 / CIP 104966 / NBRC 100827 / IM2)</name>
    <dbReference type="NCBI Taxonomy" id="178306"/>
    <lineage>
        <taxon>Archaea</taxon>
        <taxon>Thermoproteota</taxon>
        <taxon>Thermoprotei</taxon>
        <taxon>Thermoproteales</taxon>
        <taxon>Thermoproteaceae</taxon>
        <taxon>Pyrobaculum</taxon>
    </lineage>
</organism>
<protein>
    <recommendedName>
        <fullName>Ribosome biogenesis protein Nop10</fullName>
    </recommendedName>
</protein>
<reference key="1">
    <citation type="journal article" date="2002" name="Proc. Natl. Acad. Sci. U.S.A.">
        <title>Genome sequence of the hyperthermophilic crenarchaeon Pyrobaculum aerophilum.</title>
        <authorList>
            <person name="Fitz-Gibbon S.T."/>
            <person name="Ladner H."/>
            <person name="Kim U.-J."/>
            <person name="Stetter K.O."/>
            <person name="Simon M.I."/>
            <person name="Miller J.H."/>
        </authorList>
    </citation>
    <scope>NUCLEOTIDE SEQUENCE [LARGE SCALE GENOMIC DNA]</scope>
    <source>
        <strain>ATCC 51768 / DSM 7523 / JCM 9630 / CIP 104966 / NBRC 100827 / IM2</strain>
    </source>
</reference>
<dbReference type="EMBL" id="AE009441">
    <property type="protein sequence ID" value="AAL64623.1"/>
    <property type="molecule type" value="Genomic_DNA"/>
</dbReference>
<dbReference type="RefSeq" id="WP_011009091.1">
    <property type="nucleotide sequence ID" value="NC_003364.1"/>
</dbReference>
<dbReference type="SMR" id="Q8ZTY6"/>
<dbReference type="FunCoup" id="Q8ZTY6">
    <property type="interactions" value="100"/>
</dbReference>
<dbReference type="STRING" id="178306.PAE3031"/>
<dbReference type="EnsemblBacteria" id="AAL64623">
    <property type="protein sequence ID" value="AAL64623"/>
    <property type="gene ID" value="PAE3031"/>
</dbReference>
<dbReference type="GeneID" id="1463792"/>
<dbReference type="KEGG" id="pai:PAE3031"/>
<dbReference type="PATRIC" id="fig|178306.9.peg.2280"/>
<dbReference type="eggNOG" id="arCOG00906">
    <property type="taxonomic scope" value="Archaea"/>
</dbReference>
<dbReference type="HOGENOM" id="CLU_196480_0_0_2"/>
<dbReference type="InParanoid" id="Q8ZTY6"/>
<dbReference type="Proteomes" id="UP000002439">
    <property type="component" value="Chromosome"/>
</dbReference>
<dbReference type="GO" id="GO:1990904">
    <property type="term" value="C:ribonucleoprotein complex"/>
    <property type="evidence" value="ECO:0007669"/>
    <property type="project" value="UniProtKB-KW"/>
</dbReference>
<dbReference type="GO" id="GO:0030515">
    <property type="term" value="F:snoRNA binding"/>
    <property type="evidence" value="ECO:0007669"/>
    <property type="project" value="InterPro"/>
</dbReference>
<dbReference type="GO" id="GO:0001522">
    <property type="term" value="P:pseudouridine synthesis"/>
    <property type="evidence" value="ECO:0007669"/>
    <property type="project" value="InterPro"/>
</dbReference>
<dbReference type="GO" id="GO:0006364">
    <property type="term" value="P:rRNA processing"/>
    <property type="evidence" value="ECO:0007669"/>
    <property type="project" value="UniProtKB-UniRule"/>
</dbReference>
<dbReference type="Gene3D" id="2.20.28.40">
    <property type="entry name" value="H/ACA ribonucleoprotein complex, subunit Nop10"/>
    <property type="match status" value="1"/>
</dbReference>
<dbReference type="HAMAP" id="MF_00803">
    <property type="entry name" value="Nop10"/>
    <property type="match status" value="1"/>
</dbReference>
<dbReference type="InterPro" id="IPR007264">
    <property type="entry name" value="H/ACA_rnp_Nop10"/>
</dbReference>
<dbReference type="InterPro" id="IPR036756">
    <property type="entry name" value="H/ACA_rnp_Nop10_sf"/>
</dbReference>
<dbReference type="InterPro" id="IPR023532">
    <property type="entry name" value="Nop10_arc-typ"/>
</dbReference>
<dbReference type="NCBIfam" id="NF009623">
    <property type="entry name" value="PRK13130.1"/>
    <property type="match status" value="1"/>
</dbReference>
<dbReference type="PANTHER" id="PTHR13305:SF0">
    <property type="entry name" value="H_ACA RIBONUCLEOPROTEIN COMPLEX SUBUNIT 3"/>
    <property type="match status" value="1"/>
</dbReference>
<dbReference type="PANTHER" id="PTHR13305">
    <property type="entry name" value="RIBOSOME BIOGENESIS PROTEIN NOP10"/>
    <property type="match status" value="1"/>
</dbReference>
<dbReference type="Pfam" id="PF04135">
    <property type="entry name" value="Nop10p"/>
    <property type="match status" value="1"/>
</dbReference>
<dbReference type="SUPFAM" id="SSF144210">
    <property type="entry name" value="Nop10-like SnoRNP"/>
    <property type="match status" value="1"/>
</dbReference>
<feature type="chain" id="PRO_0000149023" description="Ribosome biogenesis protein Nop10">
    <location>
        <begin position="1"/>
        <end position="72"/>
    </location>
</feature>
<proteinExistence type="inferred from homology"/>
<name>NOP10_PYRAE</name>
<sequence length="72" mass="8406">MKSLLRRCVNCGEYTLSKDKCPRCGGAVRVPHPPKFSPEDKYQKYRILQKLLMGKLPIRDETKERLLRDLTS</sequence>
<evidence type="ECO:0000250" key="1"/>
<evidence type="ECO:0000305" key="2"/>
<keyword id="KW-1185">Reference proteome</keyword>
<keyword id="KW-0687">Ribonucleoprotein</keyword>
<keyword id="KW-0690">Ribosome biogenesis</keyword>
<keyword id="KW-0698">rRNA processing</keyword>
<accession>Q8ZTY6</accession>